<comment type="function">
    <text evidence="1">One of the primary rRNA binding proteins, it binds directly to 16S rRNA central domain where it helps coordinate assembly of the platform of the 30S subunit.</text>
</comment>
<comment type="subunit">
    <text evidence="1">Part of the 30S ribosomal subunit. Contacts proteins S5 and S12.</text>
</comment>
<comment type="similarity">
    <text evidence="1">Belongs to the universal ribosomal protein uS8 family.</text>
</comment>
<protein>
    <recommendedName>
        <fullName evidence="1">Small ribosomal subunit protein uS8</fullName>
    </recommendedName>
    <alternativeName>
        <fullName evidence="2">30S ribosomal protein S8</fullName>
    </alternativeName>
</protein>
<gene>
    <name evidence="1" type="primary">rpsH</name>
    <name type="ordered locus">EFER_3289</name>
</gene>
<proteinExistence type="inferred from homology"/>
<keyword id="KW-0687">Ribonucleoprotein</keyword>
<keyword id="KW-0689">Ribosomal protein</keyword>
<keyword id="KW-0694">RNA-binding</keyword>
<keyword id="KW-0699">rRNA-binding</keyword>
<organism>
    <name type="scientific">Escherichia fergusonii (strain ATCC 35469 / DSM 13698 / CCUG 18766 / IAM 14443 / JCM 21226 / LMG 7866 / NBRC 102419 / NCTC 12128 / CDC 0568-73)</name>
    <dbReference type="NCBI Taxonomy" id="585054"/>
    <lineage>
        <taxon>Bacteria</taxon>
        <taxon>Pseudomonadati</taxon>
        <taxon>Pseudomonadota</taxon>
        <taxon>Gammaproteobacteria</taxon>
        <taxon>Enterobacterales</taxon>
        <taxon>Enterobacteriaceae</taxon>
        <taxon>Escherichia</taxon>
    </lineage>
</organism>
<reference key="1">
    <citation type="journal article" date="2009" name="PLoS Genet.">
        <title>Organised genome dynamics in the Escherichia coli species results in highly diverse adaptive paths.</title>
        <authorList>
            <person name="Touchon M."/>
            <person name="Hoede C."/>
            <person name="Tenaillon O."/>
            <person name="Barbe V."/>
            <person name="Baeriswyl S."/>
            <person name="Bidet P."/>
            <person name="Bingen E."/>
            <person name="Bonacorsi S."/>
            <person name="Bouchier C."/>
            <person name="Bouvet O."/>
            <person name="Calteau A."/>
            <person name="Chiapello H."/>
            <person name="Clermont O."/>
            <person name="Cruveiller S."/>
            <person name="Danchin A."/>
            <person name="Diard M."/>
            <person name="Dossat C."/>
            <person name="Karoui M.E."/>
            <person name="Frapy E."/>
            <person name="Garry L."/>
            <person name="Ghigo J.M."/>
            <person name="Gilles A.M."/>
            <person name="Johnson J."/>
            <person name="Le Bouguenec C."/>
            <person name="Lescat M."/>
            <person name="Mangenot S."/>
            <person name="Martinez-Jehanne V."/>
            <person name="Matic I."/>
            <person name="Nassif X."/>
            <person name="Oztas S."/>
            <person name="Petit M.A."/>
            <person name="Pichon C."/>
            <person name="Rouy Z."/>
            <person name="Ruf C.S."/>
            <person name="Schneider D."/>
            <person name="Tourret J."/>
            <person name="Vacherie B."/>
            <person name="Vallenet D."/>
            <person name="Medigue C."/>
            <person name="Rocha E.P.C."/>
            <person name="Denamur E."/>
        </authorList>
    </citation>
    <scope>NUCLEOTIDE SEQUENCE [LARGE SCALE GENOMIC DNA]</scope>
    <source>
        <strain>ATCC 35469 / DSM 13698 / BCRC 15582 / CCUG 18766 / IAM 14443 / JCM 21226 / LMG 7866 / NBRC 102419 / NCTC 12128 / CDC 0568-73</strain>
    </source>
</reference>
<dbReference type="EMBL" id="CU928158">
    <property type="protein sequence ID" value="CAQ90769.1"/>
    <property type="molecule type" value="Genomic_DNA"/>
</dbReference>
<dbReference type="RefSeq" id="WP_000062611.1">
    <property type="nucleotide sequence ID" value="NC_011740.1"/>
</dbReference>
<dbReference type="SMR" id="B7LRS2"/>
<dbReference type="GeneID" id="93778681"/>
<dbReference type="KEGG" id="efe:EFER_3289"/>
<dbReference type="HOGENOM" id="CLU_098428_0_0_6"/>
<dbReference type="OrthoDB" id="9802617at2"/>
<dbReference type="Proteomes" id="UP000000745">
    <property type="component" value="Chromosome"/>
</dbReference>
<dbReference type="GO" id="GO:1990904">
    <property type="term" value="C:ribonucleoprotein complex"/>
    <property type="evidence" value="ECO:0007669"/>
    <property type="project" value="UniProtKB-KW"/>
</dbReference>
<dbReference type="GO" id="GO:0005840">
    <property type="term" value="C:ribosome"/>
    <property type="evidence" value="ECO:0007669"/>
    <property type="project" value="UniProtKB-KW"/>
</dbReference>
<dbReference type="GO" id="GO:0019843">
    <property type="term" value="F:rRNA binding"/>
    <property type="evidence" value="ECO:0007669"/>
    <property type="project" value="UniProtKB-UniRule"/>
</dbReference>
<dbReference type="GO" id="GO:0003735">
    <property type="term" value="F:structural constituent of ribosome"/>
    <property type="evidence" value="ECO:0007669"/>
    <property type="project" value="InterPro"/>
</dbReference>
<dbReference type="GO" id="GO:0006412">
    <property type="term" value="P:translation"/>
    <property type="evidence" value="ECO:0007669"/>
    <property type="project" value="UniProtKB-UniRule"/>
</dbReference>
<dbReference type="FunFam" id="3.30.1370.30:FF:000003">
    <property type="entry name" value="30S ribosomal protein S8"/>
    <property type="match status" value="1"/>
</dbReference>
<dbReference type="FunFam" id="3.30.1490.10:FF:000001">
    <property type="entry name" value="30S ribosomal protein S8"/>
    <property type="match status" value="1"/>
</dbReference>
<dbReference type="Gene3D" id="3.30.1370.30">
    <property type="match status" value="1"/>
</dbReference>
<dbReference type="Gene3D" id="3.30.1490.10">
    <property type="match status" value="1"/>
</dbReference>
<dbReference type="HAMAP" id="MF_01302_B">
    <property type="entry name" value="Ribosomal_uS8_B"/>
    <property type="match status" value="1"/>
</dbReference>
<dbReference type="InterPro" id="IPR000630">
    <property type="entry name" value="Ribosomal_uS8"/>
</dbReference>
<dbReference type="InterPro" id="IPR047863">
    <property type="entry name" value="Ribosomal_uS8_CS"/>
</dbReference>
<dbReference type="InterPro" id="IPR035987">
    <property type="entry name" value="Ribosomal_uS8_sf"/>
</dbReference>
<dbReference type="NCBIfam" id="NF001109">
    <property type="entry name" value="PRK00136.1"/>
    <property type="match status" value="1"/>
</dbReference>
<dbReference type="PANTHER" id="PTHR11758">
    <property type="entry name" value="40S RIBOSOMAL PROTEIN S15A"/>
    <property type="match status" value="1"/>
</dbReference>
<dbReference type="Pfam" id="PF00410">
    <property type="entry name" value="Ribosomal_S8"/>
    <property type="match status" value="1"/>
</dbReference>
<dbReference type="SUPFAM" id="SSF56047">
    <property type="entry name" value="Ribosomal protein S8"/>
    <property type="match status" value="1"/>
</dbReference>
<dbReference type="PROSITE" id="PS00053">
    <property type="entry name" value="RIBOSOMAL_S8"/>
    <property type="match status" value="1"/>
</dbReference>
<name>RS8_ESCF3</name>
<feature type="chain" id="PRO_1000140556" description="Small ribosomal subunit protein uS8">
    <location>
        <begin position="1"/>
        <end position="130"/>
    </location>
</feature>
<sequence>MSMQDPIADMLTRIRNGQAANKAAVTMPSSKLKVAIANVLKEEGFIEDFKVEGDTKPELELTLKYFQGKAVVESIQRVSRPGLRIYKRKDELPKVMAGLGIAVVSTSKGVMTDRAARQAGLGGEIICYVA</sequence>
<accession>B7LRS2</accession>
<evidence type="ECO:0000255" key="1">
    <source>
        <dbReference type="HAMAP-Rule" id="MF_01302"/>
    </source>
</evidence>
<evidence type="ECO:0000305" key="2"/>